<evidence type="ECO:0000255" key="1">
    <source>
        <dbReference type="HAMAP-Rule" id="MF_00360"/>
    </source>
</evidence>
<evidence type="ECO:0000256" key="2">
    <source>
        <dbReference type="SAM" id="MobiDB-lite"/>
    </source>
</evidence>
<evidence type="ECO:0000305" key="3"/>
<keyword id="KW-0687">Ribonucleoprotein</keyword>
<keyword id="KW-0689">Ribosomal protein</keyword>
<keyword id="KW-0694">RNA-binding</keyword>
<keyword id="KW-0699">rRNA-binding</keyword>
<accession>A5U9U8</accession>
<feature type="chain" id="PRO_1000005269" description="Small ribosomal subunit protein bS6">
    <location>
        <begin position="1"/>
        <end position="125"/>
    </location>
</feature>
<feature type="region of interest" description="Disordered" evidence="2">
    <location>
        <begin position="97"/>
        <end position="125"/>
    </location>
</feature>
<feature type="compositionally biased region" description="Basic and acidic residues" evidence="2">
    <location>
        <begin position="104"/>
        <end position="113"/>
    </location>
</feature>
<feature type="compositionally biased region" description="Acidic residues" evidence="2">
    <location>
        <begin position="116"/>
        <end position="125"/>
    </location>
</feature>
<proteinExistence type="inferred from homology"/>
<sequence length="125" mass="14512">MRHYEIVFMVHPDQSEQVPGMIERYTGSVKEAGGQVHRLEDWGRRQLAYPINKLHKAHYVLMNVEVPQQVIDELETTFRYNDAVLRSLVIHTKHAVTEASPMKAAKEERKPLAEVENNDFEDAEE</sequence>
<name>RS6_HAEIE</name>
<comment type="function">
    <text evidence="1">Binds together with bS18 to 16S ribosomal RNA.</text>
</comment>
<comment type="similarity">
    <text evidence="1">Belongs to the bacterial ribosomal protein bS6 family.</text>
</comment>
<organism>
    <name type="scientific">Haemophilus influenzae (strain PittEE)</name>
    <dbReference type="NCBI Taxonomy" id="374930"/>
    <lineage>
        <taxon>Bacteria</taxon>
        <taxon>Pseudomonadati</taxon>
        <taxon>Pseudomonadota</taxon>
        <taxon>Gammaproteobacteria</taxon>
        <taxon>Pasteurellales</taxon>
        <taxon>Pasteurellaceae</taxon>
        <taxon>Haemophilus</taxon>
    </lineage>
</organism>
<reference key="1">
    <citation type="journal article" date="2007" name="Genome Biol.">
        <title>Characterization and modeling of the Haemophilus influenzae core and supragenomes based on the complete genomic sequences of Rd and 12 clinical nontypeable strains.</title>
        <authorList>
            <person name="Hogg J.S."/>
            <person name="Hu F.Z."/>
            <person name="Janto B."/>
            <person name="Boissy R."/>
            <person name="Hayes J."/>
            <person name="Keefe R."/>
            <person name="Post J.C."/>
            <person name="Ehrlich G.D."/>
        </authorList>
    </citation>
    <scope>NUCLEOTIDE SEQUENCE [LARGE SCALE GENOMIC DNA]</scope>
    <source>
        <strain>PittEE</strain>
    </source>
</reference>
<protein>
    <recommendedName>
        <fullName evidence="1">Small ribosomal subunit protein bS6</fullName>
    </recommendedName>
    <alternativeName>
        <fullName evidence="3">30S ribosomal protein S6</fullName>
    </alternativeName>
</protein>
<dbReference type="EMBL" id="CP000671">
    <property type="protein sequence ID" value="ABQ97549.1"/>
    <property type="molecule type" value="Genomic_DNA"/>
</dbReference>
<dbReference type="SMR" id="A5U9U8"/>
<dbReference type="KEGG" id="hip:CGSHiEE_00255"/>
<dbReference type="HOGENOM" id="CLU_113441_6_1_6"/>
<dbReference type="GO" id="GO:0022627">
    <property type="term" value="C:cytosolic small ribosomal subunit"/>
    <property type="evidence" value="ECO:0007669"/>
    <property type="project" value="TreeGrafter"/>
</dbReference>
<dbReference type="GO" id="GO:0070181">
    <property type="term" value="F:small ribosomal subunit rRNA binding"/>
    <property type="evidence" value="ECO:0007669"/>
    <property type="project" value="TreeGrafter"/>
</dbReference>
<dbReference type="GO" id="GO:0003735">
    <property type="term" value="F:structural constituent of ribosome"/>
    <property type="evidence" value="ECO:0007669"/>
    <property type="project" value="InterPro"/>
</dbReference>
<dbReference type="GO" id="GO:0006412">
    <property type="term" value="P:translation"/>
    <property type="evidence" value="ECO:0007669"/>
    <property type="project" value="UniProtKB-UniRule"/>
</dbReference>
<dbReference type="CDD" id="cd00473">
    <property type="entry name" value="bS6"/>
    <property type="match status" value="1"/>
</dbReference>
<dbReference type="FunFam" id="3.30.70.60:FF:000003">
    <property type="entry name" value="30S ribosomal protein S6"/>
    <property type="match status" value="1"/>
</dbReference>
<dbReference type="Gene3D" id="3.30.70.60">
    <property type="match status" value="1"/>
</dbReference>
<dbReference type="HAMAP" id="MF_00360">
    <property type="entry name" value="Ribosomal_bS6"/>
    <property type="match status" value="1"/>
</dbReference>
<dbReference type="InterPro" id="IPR000529">
    <property type="entry name" value="Ribosomal_bS6"/>
</dbReference>
<dbReference type="InterPro" id="IPR020815">
    <property type="entry name" value="Ribosomal_bS6_CS"/>
</dbReference>
<dbReference type="InterPro" id="IPR035980">
    <property type="entry name" value="Ribosomal_bS6_sf"/>
</dbReference>
<dbReference type="InterPro" id="IPR020814">
    <property type="entry name" value="Ribosomal_S6_plastid/chlpt"/>
</dbReference>
<dbReference type="InterPro" id="IPR014717">
    <property type="entry name" value="Transl_elong_EF1B/ribsomal_bS6"/>
</dbReference>
<dbReference type="NCBIfam" id="TIGR00166">
    <property type="entry name" value="S6"/>
    <property type="match status" value="1"/>
</dbReference>
<dbReference type="PANTHER" id="PTHR21011">
    <property type="entry name" value="MITOCHONDRIAL 28S RIBOSOMAL PROTEIN S6"/>
    <property type="match status" value="1"/>
</dbReference>
<dbReference type="PANTHER" id="PTHR21011:SF1">
    <property type="entry name" value="SMALL RIBOSOMAL SUBUNIT PROTEIN BS6M"/>
    <property type="match status" value="1"/>
</dbReference>
<dbReference type="Pfam" id="PF01250">
    <property type="entry name" value="Ribosomal_S6"/>
    <property type="match status" value="1"/>
</dbReference>
<dbReference type="SUPFAM" id="SSF54995">
    <property type="entry name" value="Ribosomal protein S6"/>
    <property type="match status" value="1"/>
</dbReference>
<dbReference type="PROSITE" id="PS01048">
    <property type="entry name" value="RIBOSOMAL_S6"/>
    <property type="match status" value="1"/>
</dbReference>
<gene>
    <name evidence="1" type="primary">rpsF</name>
    <name type="ordered locus">CGSHiEE_00255</name>
</gene>